<accession>B5YM03</accession>
<keyword id="KW-0456">Lyase</keyword>
<keyword id="KW-1185">Reference proteome</keyword>
<evidence type="ECO:0000255" key="1">
    <source>
        <dbReference type="HAMAP-Rule" id="MF_03139"/>
    </source>
</evidence>
<dbReference type="EC" id="4.2.1.104" evidence="1"/>
<dbReference type="EMBL" id="CP001159">
    <property type="protein sequence ID" value="ACI64326.1"/>
    <property type="molecule type" value="Genomic_DNA"/>
</dbReference>
<dbReference type="RefSeq" id="XP_002295609.1">
    <property type="nucleotide sequence ID" value="XM_002295573.1"/>
</dbReference>
<dbReference type="SMR" id="B5YM03"/>
<dbReference type="STRING" id="35128.B5YM03"/>
<dbReference type="PaxDb" id="35128-Thaps264532"/>
<dbReference type="EnsemblProtists" id="ACI64326">
    <property type="protein sequence ID" value="ACI64326"/>
    <property type="gene ID" value="THAPS_264532"/>
</dbReference>
<dbReference type="GeneID" id="7444797"/>
<dbReference type="KEGG" id="tps:THAPS_264532"/>
<dbReference type="eggNOG" id="ENOG502RY7W">
    <property type="taxonomic scope" value="Eukaryota"/>
</dbReference>
<dbReference type="InParanoid" id="B5YM03"/>
<dbReference type="OMA" id="YELVMIN"/>
<dbReference type="Proteomes" id="UP000001449">
    <property type="component" value="Chromosome 18"/>
</dbReference>
<dbReference type="GO" id="GO:0008824">
    <property type="term" value="F:cyanate hydratase activity"/>
    <property type="evidence" value="ECO:0007669"/>
    <property type="project" value="UniProtKB-UniRule"/>
</dbReference>
<dbReference type="GO" id="GO:0003677">
    <property type="term" value="F:DNA binding"/>
    <property type="evidence" value="ECO:0007669"/>
    <property type="project" value="InterPro"/>
</dbReference>
<dbReference type="GO" id="GO:0009439">
    <property type="term" value="P:cyanate metabolic process"/>
    <property type="evidence" value="ECO:0007669"/>
    <property type="project" value="UniProtKB-UniRule"/>
</dbReference>
<dbReference type="CDD" id="cd00093">
    <property type="entry name" value="HTH_XRE"/>
    <property type="match status" value="1"/>
</dbReference>
<dbReference type="Gene3D" id="3.30.1160.10">
    <property type="entry name" value="Cyanate lyase, C-terminal domain"/>
    <property type="match status" value="1"/>
</dbReference>
<dbReference type="Gene3D" id="1.10.260.40">
    <property type="entry name" value="lambda repressor-like DNA-binding domains"/>
    <property type="match status" value="1"/>
</dbReference>
<dbReference type="HAMAP" id="MF_00535">
    <property type="entry name" value="Cyanate_hydrat"/>
    <property type="match status" value="1"/>
</dbReference>
<dbReference type="InterPro" id="IPR001387">
    <property type="entry name" value="Cro/C1-type_HTH"/>
</dbReference>
<dbReference type="InterPro" id="IPR008076">
    <property type="entry name" value="Cyanase"/>
</dbReference>
<dbReference type="InterPro" id="IPR003712">
    <property type="entry name" value="Cyanate_lyase_C"/>
</dbReference>
<dbReference type="InterPro" id="IPR036581">
    <property type="entry name" value="Cyanate_lyase_C_sf"/>
</dbReference>
<dbReference type="InterPro" id="IPR010982">
    <property type="entry name" value="Lambda_DNA-bd_dom_sf"/>
</dbReference>
<dbReference type="NCBIfam" id="TIGR00673">
    <property type="entry name" value="cynS"/>
    <property type="match status" value="1"/>
</dbReference>
<dbReference type="PANTHER" id="PTHR34186">
    <property type="entry name" value="CYANATE HYDRATASE"/>
    <property type="match status" value="1"/>
</dbReference>
<dbReference type="PANTHER" id="PTHR34186:SF2">
    <property type="entry name" value="CYANATE HYDRATASE"/>
    <property type="match status" value="1"/>
</dbReference>
<dbReference type="Pfam" id="PF02560">
    <property type="entry name" value="Cyanate_lyase"/>
    <property type="match status" value="1"/>
</dbReference>
<dbReference type="Pfam" id="PF01381">
    <property type="entry name" value="HTH_3"/>
    <property type="match status" value="1"/>
</dbReference>
<dbReference type="PRINTS" id="PR01693">
    <property type="entry name" value="CYANASE"/>
</dbReference>
<dbReference type="SMART" id="SM01116">
    <property type="entry name" value="Cyanate_lyase"/>
    <property type="match status" value="1"/>
</dbReference>
<dbReference type="SMART" id="SM00530">
    <property type="entry name" value="HTH_XRE"/>
    <property type="match status" value="1"/>
</dbReference>
<dbReference type="SUPFAM" id="SSF55234">
    <property type="entry name" value="Cyanase C-terminal domain"/>
    <property type="match status" value="1"/>
</dbReference>
<dbReference type="SUPFAM" id="SSF47413">
    <property type="entry name" value="lambda repressor-like DNA-binding domains"/>
    <property type="match status" value="1"/>
</dbReference>
<sequence>MLSQCLSRTSRAVAGSNGHRFSKLSAIDGVHHAHPSPRRYTTFSSSDHADRTKRLLDAKEKAGLTYDKLASKLGITNTYAAQILLGQTKLSAATAAKLQAALPISEQDIEDMKSTYPMRGFDDEILKEPNVYRTYEAITHYGEAIKSIINEQCGDGIMSAIDFYCDVGTTTGVNGEKRVVITFNGKFLPHIEQKEEDNTAKSPRD</sequence>
<name>CYNS_THAPS</name>
<protein>
    <recommendedName>
        <fullName evidence="1">Cyanate hydratase</fullName>
        <shortName evidence="1">Cyanase</shortName>
        <ecNumber evidence="1">4.2.1.104</ecNumber>
    </recommendedName>
    <alternativeName>
        <fullName evidence="1">Cyanate hydrolase</fullName>
    </alternativeName>
    <alternativeName>
        <fullName evidence="1">Cyanate lyase</fullName>
    </alternativeName>
</protein>
<gene>
    <name evidence="1" type="primary">CYN</name>
    <name type="ORF">THAPS_264532</name>
</gene>
<proteinExistence type="inferred from homology"/>
<reference key="1">
    <citation type="journal article" date="2004" name="Science">
        <title>The genome of the diatom Thalassiosira pseudonana: ecology, evolution, and metabolism.</title>
        <authorList>
            <person name="Armbrust E.V."/>
            <person name="Berges J.A."/>
            <person name="Bowler C."/>
            <person name="Green B.R."/>
            <person name="Martinez D."/>
            <person name="Putnam N.H."/>
            <person name="Zhou S."/>
            <person name="Allen A.E."/>
            <person name="Apt K.E."/>
            <person name="Bechner M."/>
            <person name="Brzezinski M.A."/>
            <person name="Chaal B.K."/>
            <person name="Chiovitti A."/>
            <person name="Davis A.K."/>
            <person name="Demarest M.S."/>
            <person name="Detter J.C."/>
            <person name="Glavina T."/>
            <person name="Goodstein D."/>
            <person name="Hadi M.Z."/>
            <person name="Hellsten U."/>
            <person name="Hildebrand M."/>
            <person name="Jenkins B.D."/>
            <person name="Jurka J."/>
            <person name="Kapitonov V.V."/>
            <person name="Kroger N."/>
            <person name="Lau W.W."/>
            <person name="Lane T.W."/>
            <person name="Larimer F.W."/>
            <person name="Lippmeier J.C."/>
            <person name="Lucas S."/>
            <person name="Medina M."/>
            <person name="Montsant A."/>
            <person name="Obornik M."/>
            <person name="Parker M.S."/>
            <person name="Palenik B."/>
            <person name="Pazour G.J."/>
            <person name="Richardson P.M."/>
            <person name="Rynearson T.A."/>
            <person name="Saito M.A."/>
            <person name="Schwartz D.C."/>
            <person name="Thamatrakoln K."/>
            <person name="Valentin K."/>
            <person name="Vardi A."/>
            <person name="Wilkerson F.P."/>
            <person name="Rokhsar D.S."/>
        </authorList>
    </citation>
    <scope>NUCLEOTIDE SEQUENCE [LARGE SCALE GENOMIC DNA]</scope>
    <source>
        <strain>CCMP1335 / NEPCC58 / CCAP 1085/12</strain>
    </source>
</reference>
<reference key="2">
    <citation type="submission" date="2008-09" db="EMBL/GenBank/DDBJ databases">
        <authorList>
            <consortium name="Diatom Consortium"/>
            <person name="Grigoriev I."/>
            <person name="Grimwood J."/>
            <person name="Kuo A."/>
            <person name="Otillar R.P."/>
            <person name="Salamov A."/>
            <person name="Detter J.C."/>
            <person name="Schmutz J."/>
            <person name="Lindquist E."/>
            <person name="Shapiro H."/>
            <person name="Lucas S."/>
            <person name="Glavina del Rio T."/>
            <person name="Bruce D."/>
            <person name="Pitluck S."/>
            <person name="Rokhsar D."/>
            <person name="Armbrust V."/>
        </authorList>
    </citation>
    <scope>GENOME REANNOTATION</scope>
    <source>
        <strain>CCMP1335 / NEPCC58 / CCAP 1085/12</strain>
    </source>
</reference>
<feature type="chain" id="PRO_0000403233" description="Cyanate hydratase">
    <location>
        <begin position="1"/>
        <end position="205"/>
    </location>
</feature>
<feature type="active site" evidence="1">
    <location>
        <position position="133"/>
    </location>
</feature>
<feature type="active site" evidence="1">
    <location>
        <position position="136"/>
    </location>
</feature>
<feature type="active site" evidence="1">
    <location>
        <position position="159"/>
    </location>
</feature>
<comment type="function">
    <text evidence="1">Catalyzes the reaction of cyanate with bicarbonate to produce ammonia and carbon dioxide.</text>
</comment>
<comment type="catalytic activity">
    <reaction evidence="1">
        <text>cyanate + hydrogencarbonate + 3 H(+) = NH4(+) + 2 CO2</text>
        <dbReference type="Rhea" id="RHEA:11120"/>
        <dbReference type="ChEBI" id="CHEBI:15378"/>
        <dbReference type="ChEBI" id="CHEBI:16526"/>
        <dbReference type="ChEBI" id="CHEBI:17544"/>
        <dbReference type="ChEBI" id="CHEBI:28938"/>
        <dbReference type="ChEBI" id="CHEBI:29195"/>
        <dbReference type="EC" id="4.2.1.104"/>
    </reaction>
</comment>
<comment type="similarity">
    <text evidence="1">Belongs to the cyanase family.</text>
</comment>
<organism>
    <name type="scientific">Thalassiosira pseudonana</name>
    <name type="common">Marine diatom</name>
    <name type="synonym">Cyclotella nana</name>
    <dbReference type="NCBI Taxonomy" id="35128"/>
    <lineage>
        <taxon>Eukaryota</taxon>
        <taxon>Sar</taxon>
        <taxon>Stramenopiles</taxon>
        <taxon>Ochrophyta</taxon>
        <taxon>Bacillariophyta</taxon>
        <taxon>Coscinodiscophyceae</taxon>
        <taxon>Thalassiosirophycidae</taxon>
        <taxon>Thalassiosirales</taxon>
        <taxon>Thalassiosiraceae</taxon>
        <taxon>Thalassiosira</taxon>
    </lineage>
</organism>